<gene>
    <name type="primary">Dpy19l2</name>
</gene>
<reference key="1">
    <citation type="journal article" date="2009" name="PLoS Biol.">
        <title>Lineage-specific biology revealed by a finished genome assembly of the mouse.</title>
        <authorList>
            <person name="Church D.M."/>
            <person name="Goodstadt L."/>
            <person name="Hillier L.W."/>
            <person name="Zody M.C."/>
            <person name="Goldstein S."/>
            <person name="She X."/>
            <person name="Bult C.J."/>
            <person name="Agarwala R."/>
            <person name="Cherry J.L."/>
            <person name="DiCuccio M."/>
            <person name="Hlavina W."/>
            <person name="Kapustin Y."/>
            <person name="Meric P."/>
            <person name="Maglott D."/>
            <person name="Birtle Z."/>
            <person name="Marques A.C."/>
            <person name="Graves T."/>
            <person name="Zhou S."/>
            <person name="Teague B."/>
            <person name="Potamousis K."/>
            <person name="Churas C."/>
            <person name="Place M."/>
            <person name="Herschleb J."/>
            <person name="Runnheim R."/>
            <person name="Forrest D."/>
            <person name="Amos-Landgraf J."/>
            <person name="Schwartz D.C."/>
            <person name="Cheng Z."/>
            <person name="Lindblad-Toh K."/>
            <person name="Eichler E.E."/>
            <person name="Ponting C.P."/>
        </authorList>
    </citation>
    <scope>NUCLEOTIDE SEQUENCE [LARGE SCALE GENOMIC DNA]</scope>
    <source>
        <strain>C57BL/6J</strain>
    </source>
</reference>
<reference key="2">
    <citation type="journal article" date="2011" name="Am. J. Hum. Genet.">
        <title>A recurrent deletion of DPY19L2 causes infertility in man by blocking sperm head elongation and acrosome formation.</title>
        <authorList>
            <person name="Harbuz R."/>
            <person name="Zouari R."/>
            <person name="Pierre V."/>
            <person name="Ben Khelifa M."/>
            <person name="Kharouf M."/>
            <person name="Coutton C."/>
            <person name="Merdassi G."/>
            <person name="Abada F."/>
            <person name="Escoffier J."/>
            <person name="Nikas Y."/>
            <person name="Vialard F."/>
            <person name="Koscinski I."/>
            <person name="Triki C."/>
            <person name="Sermondade N."/>
            <person name="Schweitzer T."/>
            <person name="Zhioua A."/>
            <person name="Zhioua F."/>
            <person name="Latrous H."/>
            <person name="Halouani L."/>
            <person name="Ouafi M."/>
            <person name="Makni M."/>
            <person name="Jouk P.S."/>
            <person name="Sele B."/>
            <person name="Hennebicq S."/>
            <person name="Satre V."/>
            <person name="Viville S."/>
            <person name="Arnoult C."/>
            <person name="Lunardi J."/>
            <person name="Ray P.F."/>
        </authorList>
    </citation>
    <scope>TISSUE SPECIFICITY</scope>
</reference>
<reference key="3">
    <citation type="journal article" date="2012" name="Development">
        <title>Absence of Dpy19l2, a new inner nuclear membrane protein, causes globozoospermia in mice by preventing the anchoring of the acrosome to the nucleus.</title>
        <authorList>
            <person name="Pierre V."/>
            <person name="Martinez G."/>
            <person name="Coutton C."/>
            <person name="Delaroche J."/>
            <person name="Yassine S."/>
            <person name="Novella C."/>
            <person name="Pernet-Gallay K."/>
            <person name="Hennebicq S."/>
            <person name="Ray P.F."/>
            <person name="Arnoult C."/>
        </authorList>
    </citation>
    <scope>SUBCELLULAR LOCATION</scope>
    <scope>DISRUPTION PHENOTYPE</scope>
    <scope>SUBUNIT</scope>
    <scope>FUNCTION</scope>
    <scope>TOPOLOGY</scope>
</reference>
<reference key="4">
    <citation type="journal article" date="2021" name="J. Cell Sci.">
        <title>FAM209 associates with DPY19L2, and is required for sperm acrosome biogenesis and fertility in mice.</title>
        <authorList>
            <person name="Castaneda J.M."/>
            <person name="Shimada K."/>
            <person name="Satouh Y."/>
            <person name="Yu Z."/>
            <person name="Devlin D.J."/>
            <person name="Ikawa M."/>
            <person name="Matzuk M.M."/>
        </authorList>
    </citation>
    <scope>SUBCELLULAR LOCATION</scope>
    <scope>INTERACTION WITH FAM209</scope>
    <scope>FUNCTION</scope>
</reference>
<evidence type="ECO:0000250" key="1">
    <source>
        <dbReference type="UniProtKB" id="P34413"/>
    </source>
</evidence>
<evidence type="ECO:0000255" key="2"/>
<evidence type="ECO:0000256" key="3">
    <source>
        <dbReference type="SAM" id="MobiDB-lite"/>
    </source>
</evidence>
<evidence type="ECO:0000269" key="4">
    <source>
    </source>
</evidence>
<evidence type="ECO:0000269" key="5">
    <source>
    </source>
</evidence>
<evidence type="ECO:0000269" key="6">
    <source>
    </source>
</evidence>
<evidence type="ECO:0000305" key="7"/>
<comment type="function">
    <text evidence="1">Probable C-mannosyltransferase that mediates C-mannosylation of tryptophan residues on target proteins.</text>
</comment>
<comment type="function">
    <text evidence="5 6">Required during spermatogenesis for sperm head elongation and acrosome formation. Also plays a role in acrosome attachment to the nuclear envelope.</text>
</comment>
<comment type="subunit">
    <text evidence="6">Interacts with FAM209.</text>
</comment>
<comment type="subcellular location">
    <subcellularLocation>
        <location evidence="5 6">Nucleus inner membrane</location>
        <topology evidence="7">Multi-pass membrane protein</topology>
    </subcellularLocation>
    <text evidence="5 6">Restricted to the inner nuclear membrane facing the acrosomal vesicle. The N- and C-termini are oriented towards the nucleoplasm (PubMed:22764053). Colocalizes with FAM209 at the inner nuclear membrane (PubMed:34471926).</text>
</comment>
<comment type="tissue specificity">
    <text evidence="4">Predominantly expressed in testis. Present in testis but absent from epididymal sperm (at protein level).</text>
</comment>
<comment type="disruption phenotype">
    <text evidence="5">Deficient male exhibit sterility associated with globozoospermia.</text>
</comment>
<comment type="similarity">
    <text evidence="7">Belongs to the dpy-19 family.</text>
</comment>
<proteinExistence type="evidence at protein level"/>
<sequence length="773" mass="89882">MVGPTRSKLREGSSDRPQSSCTGQARRRWSAATMEPQQERSAPQERTKWSLLQHFLLGGRKLPSGARNYAARRIQSLNAQNYFQLEEVAKLLLLNRFQFLFTLLDHFREKVQALQMHRFSHRTLFGLAIFVGILHWLHLITLFENDHHFSHLSSLEREMTFRTEMGLYYSYFKTIIEAPSFLEGLWMIMNDRLTEYPLVINTVKRFHLYPEVVIAYWYRTIIGIMNLFGIETKTCWNVTRMEPLNEVQSCEGLGDPACFYIGVIFILNGLMMGLFFIYSTYLSGSQLGGLITVACYFFNHGEATRVMWTPPLRESFSYPFLVLQMYILTIILRTSTVHKKHYMALCFSNVAFMLPWQFAQFILFTQIASLFPMYVVGYIEPSKFQKIIYVNMSSVALCFILMFGNSMYLSSYYSSCLLVTWAIMQKKSKIQKLGGTELQFWLIQGCFWWCGTIILKFLTSKICGVSDHIRLSDLIAARILRYTDFDTLIYTCAPEFDFMEQATPLRYIKTLLLPLILVITYLIFKKIVRDIMCVLYTNTYVRKQLLDNAELIFHTLQLLAFTGLAILIMRLKLFLTPHMCIMASLICSQRLFGWLFCRIHFENVVFGILTMMSIQGCANLHNQWSIMGEFTNLPQEELIHWIKHSTRPDAVFAGAMPTMASIKLSTLRPIVNHPHYEDADLRARTKIVYSVYSRKSAVEVRNNLLKLHVNYYVLEEAWCVVRTKPGCSMLEIWDVEDPSNAANPPLCSILLKDSRPYFTTVFQNSMYRVLKIN</sequence>
<keyword id="KW-0217">Developmental protein</keyword>
<keyword id="KW-0221">Differentiation</keyword>
<keyword id="KW-0328">Glycosyltransferase</keyword>
<keyword id="KW-0472">Membrane</keyword>
<keyword id="KW-0539">Nucleus</keyword>
<keyword id="KW-1185">Reference proteome</keyword>
<keyword id="KW-0744">Spermatogenesis</keyword>
<keyword id="KW-0808">Transferase</keyword>
<keyword id="KW-0812">Transmembrane</keyword>
<keyword id="KW-1133">Transmembrane helix</keyword>
<accession>P0CW70</accession>
<feature type="chain" id="PRO_0000408327" description="Probable C-mannosyltransferase DPY19L2">
    <location>
        <begin position="1"/>
        <end position="773"/>
    </location>
</feature>
<feature type="topological domain" description="Nuclear" evidence="5">
    <location>
        <begin position="1"/>
        <end position="122"/>
    </location>
</feature>
<feature type="transmembrane region" description="Helical" evidence="2">
    <location>
        <begin position="123"/>
        <end position="143"/>
    </location>
</feature>
<feature type="topological domain" description="Perinuclear space" evidence="7">
    <location>
        <begin position="144"/>
        <end position="209"/>
    </location>
</feature>
<feature type="transmembrane region" description="Helical" evidence="2">
    <location>
        <begin position="210"/>
        <end position="230"/>
    </location>
</feature>
<feature type="topological domain" description="Nuclear" evidence="7">
    <location>
        <begin position="231"/>
        <end position="256"/>
    </location>
</feature>
<feature type="transmembrane region" description="Helical" evidence="2">
    <location>
        <begin position="257"/>
        <end position="277"/>
    </location>
</feature>
<feature type="topological domain" description="Perinuclear space" evidence="7">
    <location>
        <begin position="278"/>
        <end position="311"/>
    </location>
</feature>
<feature type="transmembrane region" description="Helical" evidence="2">
    <location>
        <begin position="312"/>
        <end position="332"/>
    </location>
</feature>
<feature type="topological domain" description="Nuclear" evidence="7">
    <location>
        <begin position="333"/>
        <end position="358"/>
    </location>
</feature>
<feature type="transmembrane region" description="Helical" evidence="2">
    <location>
        <begin position="359"/>
        <end position="379"/>
    </location>
</feature>
<feature type="topological domain" description="Perinuclear space" evidence="7">
    <location>
        <begin position="380"/>
        <end position="386"/>
    </location>
</feature>
<feature type="transmembrane region" description="Helical" evidence="2">
    <location>
        <begin position="387"/>
        <end position="407"/>
    </location>
</feature>
<feature type="topological domain" description="Nuclear" evidence="7">
    <location>
        <begin position="408"/>
        <end position="437"/>
    </location>
</feature>
<feature type="transmembrane region" description="Helical" evidence="2">
    <location>
        <begin position="438"/>
        <end position="458"/>
    </location>
</feature>
<feature type="topological domain" description="Perinuclear space" evidence="7">
    <location>
        <begin position="459"/>
        <end position="507"/>
    </location>
</feature>
<feature type="transmembrane region" description="Helical" evidence="2">
    <location>
        <begin position="508"/>
        <end position="528"/>
    </location>
</feature>
<feature type="topological domain" description="Nuclear" evidence="7">
    <location>
        <begin position="529"/>
        <end position="548"/>
    </location>
</feature>
<feature type="transmembrane region" description="Helical" evidence="2">
    <location>
        <begin position="549"/>
        <end position="569"/>
    </location>
</feature>
<feature type="topological domain" description="Perinuclear space" evidence="7">
    <location>
        <begin position="570"/>
        <end position="590"/>
    </location>
</feature>
<feature type="transmembrane region" description="Helical" evidence="2">
    <location>
        <begin position="591"/>
        <end position="611"/>
    </location>
</feature>
<feature type="topological domain" description="Nuclear" evidence="5">
    <location>
        <begin position="612"/>
        <end position="773"/>
    </location>
</feature>
<feature type="region of interest" description="Disordered" evidence="3">
    <location>
        <begin position="1"/>
        <end position="45"/>
    </location>
</feature>
<name>D19L2_MOUSE</name>
<organism>
    <name type="scientific">Mus musculus</name>
    <name type="common">Mouse</name>
    <dbReference type="NCBI Taxonomy" id="10090"/>
    <lineage>
        <taxon>Eukaryota</taxon>
        <taxon>Metazoa</taxon>
        <taxon>Chordata</taxon>
        <taxon>Craniata</taxon>
        <taxon>Vertebrata</taxon>
        <taxon>Euteleostomi</taxon>
        <taxon>Mammalia</taxon>
        <taxon>Eutheria</taxon>
        <taxon>Euarchontoglires</taxon>
        <taxon>Glires</taxon>
        <taxon>Rodentia</taxon>
        <taxon>Myomorpha</taxon>
        <taxon>Muroidea</taxon>
        <taxon>Muridae</taxon>
        <taxon>Murinae</taxon>
        <taxon>Mus</taxon>
        <taxon>Mus</taxon>
    </lineage>
</organism>
<protein>
    <recommendedName>
        <fullName>Probable C-mannosyltransferase DPY19L2</fullName>
        <ecNumber evidence="1">2.4.1.-</ecNumber>
    </recommendedName>
    <alternativeName>
        <fullName>Dpy-19-like protein 2</fullName>
    </alternativeName>
    <alternativeName>
        <fullName>Protein dpy-19 homolog 2</fullName>
    </alternativeName>
</protein>
<dbReference type="EC" id="2.4.1.-" evidence="1"/>
<dbReference type="EMBL" id="AC154463">
    <property type="status" value="NOT_ANNOTATED_CDS"/>
    <property type="molecule type" value="Genomic_DNA"/>
</dbReference>
<dbReference type="EMBL" id="CT025664">
    <property type="status" value="NOT_ANNOTATED_CDS"/>
    <property type="molecule type" value="Genomic_DNA"/>
</dbReference>
<dbReference type="CCDS" id="CCDS52743.1"/>
<dbReference type="RefSeq" id="NP_001159679.1">
    <property type="nucleotide sequence ID" value="NM_001166207.1"/>
</dbReference>
<dbReference type="SMR" id="P0CW70"/>
<dbReference type="FunCoup" id="P0CW70">
    <property type="interactions" value="66"/>
</dbReference>
<dbReference type="STRING" id="10090.ENSMUSP00000132092"/>
<dbReference type="GlyGen" id="P0CW70">
    <property type="glycosylation" value="1 site"/>
</dbReference>
<dbReference type="iPTMnet" id="P0CW70"/>
<dbReference type="PhosphoSitePlus" id="P0CW70"/>
<dbReference type="SwissPalm" id="P0CW70"/>
<dbReference type="PaxDb" id="10090-ENSMUSP00000132092"/>
<dbReference type="PeptideAtlas" id="P0CW70"/>
<dbReference type="ProteomicsDB" id="279308"/>
<dbReference type="Antibodypedia" id="53106">
    <property type="antibodies" value="122 antibodies from 18 providers"/>
</dbReference>
<dbReference type="Ensembl" id="ENSMUST00000133010.4">
    <property type="protein sequence ID" value="ENSMUSP00000132092.2"/>
    <property type="gene ID" value="ENSMUSG00000085576.4"/>
</dbReference>
<dbReference type="GeneID" id="320752"/>
<dbReference type="KEGG" id="mmu:320752"/>
<dbReference type="UCSC" id="uc009opc.2">
    <property type="organism name" value="mouse"/>
</dbReference>
<dbReference type="AGR" id="MGI:2444662"/>
<dbReference type="CTD" id="283417"/>
<dbReference type="MGI" id="MGI:2444662">
    <property type="gene designation" value="Dpy19l2"/>
</dbReference>
<dbReference type="VEuPathDB" id="HostDB:ENSMUSG00000085576"/>
<dbReference type="eggNOG" id="KOG4587">
    <property type="taxonomic scope" value="Eukaryota"/>
</dbReference>
<dbReference type="GeneTree" id="ENSGT00530000063023"/>
<dbReference type="HOGENOM" id="CLU_014404_0_1_1"/>
<dbReference type="InParanoid" id="P0CW70"/>
<dbReference type="OMA" id="DPLQGDY"/>
<dbReference type="OrthoDB" id="6019623at2759"/>
<dbReference type="PhylomeDB" id="P0CW70"/>
<dbReference type="TreeFam" id="TF313376"/>
<dbReference type="BioGRID-ORCS" id="320752">
    <property type="hits" value="3 hits in 78 CRISPR screens"/>
</dbReference>
<dbReference type="ChiTaRS" id="Dpy19l2">
    <property type="organism name" value="mouse"/>
</dbReference>
<dbReference type="PRO" id="PR:P0CW70"/>
<dbReference type="Proteomes" id="UP000000589">
    <property type="component" value="Chromosome 9"/>
</dbReference>
<dbReference type="RNAct" id="P0CW70">
    <property type="molecule type" value="protein"/>
</dbReference>
<dbReference type="Bgee" id="ENSMUSG00000085576">
    <property type="expression patterns" value="Expressed in spermatocyte and 15 other cell types or tissues"/>
</dbReference>
<dbReference type="GO" id="GO:0005637">
    <property type="term" value="C:nuclear inner membrane"/>
    <property type="evidence" value="ECO:0000314"/>
    <property type="project" value="UniProtKB"/>
</dbReference>
<dbReference type="GO" id="GO:0016757">
    <property type="term" value="F:glycosyltransferase activity"/>
    <property type="evidence" value="ECO:0007669"/>
    <property type="project" value="UniProtKB-KW"/>
</dbReference>
<dbReference type="GO" id="GO:0007286">
    <property type="term" value="P:spermatid development"/>
    <property type="evidence" value="ECO:0000315"/>
    <property type="project" value="UniProtKB"/>
</dbReference>
<dbReference type="CDD" id="cd20179">
    <property type="entry name" value="Dpy19L2"/>
    <property type="match status" value="1"/>
</dbReference>
<dbReference type="InterPro" id="IPR018732">
    <property type="entry name" value="Dpy-19/Dpy-19-like"/>
</dbReference>
<dbReference type="PANTHER" id="PTHR31488:SF6">
    <property type="entry name" value="C-MANNOSYLTRANSFERASE DPY19L2-RELATED"/>
    <property type="match status" value="1"/>
</dbReference>
<dbReference type="PANTHER" id="PTHR31488">
    <property type="entry name" value="DPY-19-LIKE 1, LIKE (H. SAPIENS)"/>
    <property type="match status" value="1"/>
</dbReference>
<dbReference type="Pfam" id="PF10034">
    <property type="entry name" value="Dpy19"/>
    <property type="match status" value="1"/>
</dbReference>